<evidence type="ECO:0000255" key="1">
    <source>
        <dbReference type="HAMAP-Rule" id="MF_00431"/>
    </source>
</evidence>
<dbReference type="EMBL" id="DQ887676">
    <property type="protein sequence ID" value="ABH88307.1"/>
    <property type="molecule type" value="Genomic_DNA"/>
</dbReference>
<dbReference type="RefSeq" id="YP_784396.1">
    <property type="nucleotide sequence ID" value="NC_008456.1"/>
</dbReference>
<dbReference type="SMR" id="Q06GY7"/>
<dbReference type="GeneID" id="4363572"/>
<dbReference type="GO" id="GO:0009535">
    <property type="term" value="C:chloroplast thylakoid membrane"/>
    <property type="evidence" value="ECO:0007669"/>
    <property type="project" value="UniProtKB-SubCell"/>
</dbReference>
<dbReference type="GO" id="GO:0009522">
    <property type="term" value="C:photosystem I"/>
    <property type="evidence" value="ECO:0007669"/>
    <property type="project" value="UniProtKB-KW"/>
</dbReference>
<dbReference type="GO" id="GO:0015979">
    <property type="term" value="P:photosynthesis"/>
    <property type="evidence" value="ECO:0007669"/>
    <property type="project" value="UniProtKB-UniRule"/>
</dbReference>
<dbReference type="HAMAP" id="MF_00431">
    <property type="entry name" value="PSI_PsaI"/>
    <property type="match status" value="1"/>
</dbReference>
<dbReference type="InterPro" id="IPR001302">
    <property type="entry name" value="PSI_PsaI"/>
</dbReference>
<dbReference type="InterPro" id="IPR036357">
    <property type="entry name" value="PSI_PsaI_sf"/>
</dbReference>
<dbReference type="NCBIfam" id="TIGR03052">
    <property type="entry name" value="PS_I_psaI"/>
    <property type="match status" value="1"/>
</dbReference>
<dbReference type="PANTHER" id="PTHR35775">
    <property type="match status" value="1"/>
</dbReference>
<dbReference type="PANTHER" id="PTHR35775:SF2">
    <property type="entry name" value="PHOTOSYSTEM I REACTION CENTER SUBUNIT VIII"/>
    <property type="match status" value="1"/>
</dbReference>
<dbReference type="Pfam" id="PF00796">
    <property type="entry name" value="PSI_8"/>
    <property type="match status" value="1"/>
</dbReference>
<dbReference type="SUPFAM" id="SSF81540">
    <property type="entry name" value="Subunit VIII of photosystem I reaction centre, PsaI"/>
    <property type="match status" value="1"/>
</dbReference>
<accession>Q06GY7</accession>
<name>PSAI_DRIGR</name>
<keyword id="KW-0150">Chloroplast</keyword>
<keyword id="KW-0472">Membrane</keyword>
<keyword id="KW-0602">Photosynthesis</keyword>
<keyword id="KW-0603">Photosystem I</keyword>
<keyword id="KW-0934">Plastid</keyword>
<keyword id="KW-0793">Thylakoid</keyword>
<keyword id="KW-0812">Transmembrane</keyword>
<keyword id="KW-1133">Transmembrane helix</keyword>
<geneLocation type="chloroplast"/>
<protein>
    <recommendedName>
        <fullName evidence="1">Photosystem I reaction center subunit VIII</fullName>
        <shortName evidence="1">PSI-I</shortName>
    </recommendedName>
</protein>
<organism>
    <name type="scientific">Drimys granadensis</name>
    <dbReference type="NCBI Taxonomy" id="224735"/>
    <lineage>
        <taxon>Eukaryota</taxon>
        <taxon>Viridiplantae</taxon>
        <taxon>Streptophyta</taxon>
        <taxon>Embryophyta</taxon>
        <taxon>Tracheophyta</taxon>
        <taxon>Spermatophyta</taxon>
        <taxon>Magnoliopsida</taxon>
        <taxon>Magnoliidae</taxon>
        <taxon>Canellales</taxon>
        <taxon>Winteraceae</taxon>
        <taxon>Drimys</taxon>
    </lineage>
</organism>
<proteinExistence type="inferred from homology"/>
<gene>
    <name evidence="1" type="primary">psaI</name>
</gene>
<sequence>MTDLNLPSIFVPLVGLVFPAIAMASLSLHVQKNKIV</sequence>
<feature type="chain" id="PRO_0000276019" description="Photosystem I reaction center subunit VIII">
    <location>
        <begin position="1"/>
        <end position="36"/>
    </location>
</feature>
<feature type="transmembrane region" description="Helical" evidence="1">
    <location>
        <begin position="6"/>
        <end position="26"/>
    </location>
</feature>
<comment type="function">
    <text evidence="1">May help in the organization of the PsaL subunit.</text>
</comment>
<comment type="subcellular location">
    <subcellularLocation>
        <location evidence="1">Plastid</location>
        <location evidence="1">Chloroplast thylakoid membrane</location>
        <topology evidence="1">Single-pass membrane protein</topology>
    </subcellularLocation>
</comment>
<comment type="similarity">
    <text evidence="1">Belongs to the PsaI family.</text>
</comment>
<reference key="1">
    <citation type="journal article" date="2006" name="BMC Evol. Biol.">
        <title>Complete plastid genome sequences of Drimys, Liriodendron, and Piper: implications for the phylogenetic relationships of magnoliids.</title>
        <authorList>
            <person name="Cai Z."/>
            <person name="Penaflor C."/>
            <person name="Kuehl J.V."/>
            <person name="Leebens-Mack J."/>
            <person name="Carlson J.E."/>
            <person name="dePamphilis C.W."/>
            <person name="Boore J.L."/>
            <person name="Jansen R.K."/>
        </authorList>
    </citation>
    <scope>NUCLEOTIDE SEQUENCE [LARGE SCALE GENOMIC DNA]</scope>
</reference>